<sequence>MTQVTVKELAKVVDTPVERLLQQMREAGLPHTAAEQVVTDNEKQALLTHLKSGHKAKVEEPRKITLQRKTTSTLRVAGSKSISVEVRKKKVFVQRSPEEIEAERKREMDERRAVENAARQKAEEEAKRRAEEDARNQPAAGQPASAPAQPVAAAEPVREAPAPAAAAPAPASAAPSADARKRDEQRRPDKPRADDRNARGGDGERKNAPHRASVKEKAPAPRVAPRTTDEESDSFRRGGRGKSRLKKRNAHGFQSPTGPVIRDVAIGETITVGELSAQMSVKAAEVIKFMFKMGTPVTINQVLDQETAQLIAEELGHKVTLVSDNALEDSLAESLKFEGESFSRAPVVTVMGHVDHGKTSLLDYIRRAKVAAGEAGGITQHIGAYHVETERGMVTFLDTPGHAAFTAMRARGAKATDIVILVVAADDGVMPQTIEAVQHAVAAGVPLVVAVNKIDKPGADLDRIRSELSVHGVTSEEWGGDTPFVSVSAKMGTGVDELLEAVLLQAEVLELKATPSAPGRGVVVESRLDKGRGPVATVLVQDGTLRQGDMVLVGSNFGRIRAMLDENGKPVKEAGPSIPVEILGLDGTPDAGDEMSVLADEKKAREVALFRQGKFREVKLARAHAGKLENIFENMGQEEKKTLNIVLKSDVRGSLEALQGALGGLGNDEVQVRVVGGGVGGITESDANLALASNAVLFGFNVRADAGARKIVEQEGLDMRYYNVIYDIIEDVKKALTGMLGSDVRENILGIAEVRDVFRSPKFGAIAGCMVLEGTVYRNRPIRVLREDIVIFEGELESLRRFKDDAAEVRAGMECGIGVKSYNDVKVGDKIEVFEKVQVARSL</sequence>
<reference key="1">
    <citation type="journal article" date="2005" name="J. Bacteriol.">
        <title>Whole-genome sequence analysis of Pseudomonas syringae pv. phaseolicola 1448A reveals divergence among pathovars in genes involved in virulence and transposition.</title>
        <authorList>
            <person name="Joardar V."/>
            <person name="Lindeberg M."/>
            <person name="Jackson R.W."/>
            <person name="Selengut J."/>
            <person name="Dodson R."/>
            <person name="Brinkac L.M."/>
            <person name="Daugherty S.C."/>
            <person name="DeBoy R.T."/>
            <person name="Durkin A.S."/>
            <person name="Gwinn Giglio M."/>
            <person name="Madupu R."/>
            <person name="Nelson W.C."/>
            <person name="Rosovitz M.J."/>
            <person name="Sullivan S.A."/>
            <person name="Crabtree J."/>
            <person name="Creasy T."/>
            <person name="Davidsen T.M."/>
            <person name="Haft D.H."/>
            <person name="Zafar N."/>
            <person name="Zhou L."/>
            <person name="Halpin R."/>
            <person name="Holley T."/>
            <person name="Khouri H.M."/>
            <person name="Feldblyum T.V."/>
            <person name="White O."/>
            <person name="Fraser C.M."/>
            <person name="Chatterjee A.K."/>
            <person name="Cartinhour S."/>
            <person name="Schneider D."/>
            <person name="Mansfield J.W."/>
            <person name="Collmer A."/>
            <person name="Buell R."/>
        </authorList>
    </citation>
    <scope>NUCLEOTIDE SEQUENCE [LARGE SCALE GENOMIC DNA]</scope>
    <source>
        <strain>1448A / Race 6</strain>
    </source>
</reference>
<accession>Q48E77</accession>
<gene>
    <name evidence="2" type="primary">infB</name>
    <name type="ordered locus">PSPPH_4189</name>
</gene>
<protein>
    <recommendedName>
        <fullName evidence="2">Translation initiation factor IF-2</fullName>
    </recommendedName>
</protein>
<keyword id="KW-0963">Cytoplasm</keyword>
<keyword id="KW-0342">GTP-binding</keyword>
<keyword id="KW-0396">Initiation factor</keyword>
<keyword id="KW-0547">Nucleotide-binding</keyword>
<keyword id="KW-0648">Protein biosynthesis</keyword>
<proteinExistence type="inferred from homology"/>
<dbReference type="EMBL" id="CP000058">
    <property type="protein sequence ID" value="AAZ34884.1"/>
    <property type="molecule type" value="Genomic_DNA"/>
</dbReference>
<dbReference type="RefSeq" id="WP_011169449.1">
    <property type="nucleotide sequence ID" value="NC_005773.3"/>
</dbReference>
<dbReference type="SMR" id="Q48E77"/>
<dbReference type="KEGG" id="psp:PSPPH_4189"/>
<dbReference type="eggNOG" id="COG0532">
    <property type="taxonomic scope" value="Bacteria"/>
</dbReference>
<dbReference type="HOGENOM" id="CLU_006301_6_1_6"/>
<dbReference type="Proteomes" id="UP000000551">
    <property type="component" value="Chromosome"/>
</dbReference>
<dbReference type="GO" id="GO:0005829">
    <property type="term" value="C:cytosol"/>
    <property type="evidence" value="ECO:0007669"/>
    <property type="project" value="TreeGrafter"/>
</dbReference>
<dbReference type="GO" id="GO:0005525">
    <property type="term" value="F:GTP binding"/>
    <property type="evidence" value="ECO:0007669"/>
    <property type="project" value="UniProtKB-KW"/>
</dbReference>
<dbReference type="GO" id="GO:0003924">
    <property type="term" value="F:GTPase activity"/>
    <property type="evidence" value="ECO:0007669"/>
    <property type="project" value="UniProtKB-UniRule"/>
</dbReference>
<dbReference type="GO" id="GO:0003743">
    <property type="term" value="F:translation initiation factor activity"/>
    <property type="evidence" value="ECO:0007669"/>
    <property type="project" value="UniProtKB-UniRule"/>
</dbReference>
<dbReference type="CDD" id="cd01887">
    <property type="entry name" value="IF2_eIF5B"/>
    <property type="match status" value="1"/>
</dbReference>
<dbReference type="CDD" id="cd03702">
    <property type="entry name" value="IF2_mtIF2_II"/>
    <property type="match status" value="1"/>
</dbReference>
<dbReference type="CDD" id="cd03692">
    <property type="entry name" value="mtIF2_IVc"/>
    <property type="match status" value="1"/>
</dbReference>
<dbReference type="FunFam" id="2.40.30.10:FF:000007">
    <property type="entry name" value="Translation initiation factor IF-2"/>
    <property type="match status" value="1"/>
</dbReference>
<dbReference type="FunFam" id="2.40.30.10:FF:000008">
    <property type="entry name" value="Translation initiation factor IF-2"/>
    <property type="match status" value="1"/>
</dbReference>
<dbReference type="FunFam" id="3.40.50.10050:FF:000001">
    <property type="entry name" value="Translation initiation factor IF-2"/>
    <property type="match status" value="1"/>
</dbReference>
<dbReference type="FunFam" id="3.40.50.300:FF:000019">
    <property type="entry name" value="Translation initiation factor IF-2"/>
    <property type="match status" value="1"/>
</dbReference>
<dbReference type="Gene3D" id="3.40.50.300">
    <property type="entry name" value="P-loop containing nucleotide triphosphate hydrolases"/>
    <property type="match status" value="1"/>
</dbReference>
<dbReference type="Gene3D" id="3.30.56.50">
    <property type="entry name" value="Putative DNA-binding domain, N-terminal subdomain of bacterial translation initiation factor IF2"/>
    <property type="match status" value="1"/>
</dbReference>
<dbReference type="Gene3D" id="2.40.30.10">
    <property type="entry name" value="Translation factors"/>
    <property type="match status" value="2"/>
</dbReference>
<dbReference type="Gene3D" id="3.40.50.10050">
    <property type="entry name" value="Translation initiation factor IF- 2, domain 3"/>
    <property type="match status" value="1"/>
</dbReference>
<dbReference type="HAMAP" id="MF_00100_B">
    <property type="entry name" value="IF_2_B"/>
    <property type="match status" value="1"/>
</dbReference>
<dbReference type="InterPro" id="IPR009061">
    <property type="entry name" value="DNA-bd_dom_put_sf"/>
</dbReference>
<dbReference type="InterPro" id="IPR053905">
    <property type="entry name" value="EF-G-like_DII"/>
</dbReference>
<dbReference type="InterPro" id="IPR013575">
    <property type="entry name" value="IF2_assoc_dom_bac"/>
</dbReference>
<dbReference type="InterPro" id="IPR044145">
    <property type="entry name" value="IF2_II"/>
</dbReference>
<dbReference type="InterPro" id="IPR006847">
    <property type="entry name" value="IF2_N"/>
</dbReference>
<dbReference type="InterPro" id="IPR027417">
    <property type="entry name" value="P-loop_NTPase"/>
</dbReference>
<dbReference type="InterPro" id="IPR005225">
    <property type="entry name" value="Small_GTP-bd"/>
</dbReference>
<dbReference type="InterPro" id="IPR000795">
    <property type="entry name" value="T_Tr_GTP-bd_dom"/>
</dbReference>
<dbReference type="InterPro" id="IPR000178">
    <property type="entry name" value="TF_IF2_bacterial-like"/>
</dbReference>
<dbReference type="InterPro" id="IPR015760">
    <property type="entry name" value="TIF_IF2"/>
</dbReference>
<dbReference type="InterPro" id="IPR023115">
    <property type="entry name" value="TIF_IF2_dom3"/>
</dbReference>
<dbReference type="InterPro" id="IPR036925">
    <property type="entry name" value="TIF_IF2_dom3_sf"/>
</dbReference>
<dbReference type="InterPro" id="IPR009000">
    <property type="entry name" value="Transl_B-barrel_sf"/>
</dbReference>
<dbReference type="NCBIfam" id="TIGR00487">
    <property type="entry name" value="IF-2"/>
    <property type="match status" value="1"/>
</dbReference>
<dbReference type="NCBIfam" id="TIGR00231">
    <property type="entry name" value="small_GTP"/>
    <property type="match status" value="1"/>
</dbReference>
<dbReference type="PANTHER" id="PTHR43381:SF5">
    <property type="entry name" value="TR-TYPE G DOMAIN-CONTAINING PROTEIN"/>
    <property type="match status" value="1"/>
</dbReference>
<dbReference type="PANTHER" id="PTHR43381">
    <property type="entry name" value="TRANSLATION INITIATION FACTOR IF-2-RELATED"/>
    <property type="match status" value="1"/>
</dbReference>
<dbReference type="Pfam" id="PF22042">
    <property type="entry name" value="EF-G_D2"/>
    <property type="match status" value="1"/>
</dbReference>
<dbReference type="Pfam" id="PF00009">
    <property type="entry name" value="GTP_EFTU"/>
    <property type="match status" value="1"/>
</dbReference>
<dbReference type="Pfam" id="PF11987">
    <property type="entry name" value="IF-2"/>
    <property type="match status" value="1"/>
</dbReference>
<dbReference type="Pfam" id="PF08364">
    <property type="entry name" value="IF2_assoc"/>
    <property type="match status" value="1"/>
</dbReference>
<dbReference type="Pfam" id="PF04760">
    <property type="entry name" value="IF2_N"/>
    <property type="match status" value="2"/>
</dbReference>
<dbReference type="SUPFAM" id="SSF52156">
    <property type="entry name" value="Initiation factor IF2/eIF5b, domain 3"/>
    <property type="match status" value="1"/>
</dbReference>
<dbReference type="SUPFAM" id="SSF52540">
    <property type="entry name" value="P-loop containing nucleoside triphosphate hydrolases"/>
    <property type="match status" value="1"/>
</dbReference>
<dbReference type="SUPFAM" id="SSF46955">
    <property type="entry name" value="Putative DNA-binding domain"/>
    <property type="match status" value="1"/>
</dbReference>
<dbReference type="SUPFAM" id="SSF50447">
    <property type="entry name" value="Translation proteins"/>
    <property type="match status" value="2"/>
</dbReference>
<dbReference type="PROSITE" id="PS51722">
    <property type="entry name" value="G_TR_2"/>
    <property type="match status" value="1"/>
</dbReference>
<dbReference type="PROSITE" id="PS01176">
    <property type="entry name" value="IF2"/>
    <property type="match status" value="1"/>
</dbReference>
<evidence type="ECO:0000250" key="1"/>
<evidence type="ECO:0000255" key="2">
    <source>
        <dbReference type="HAMAP-Rule" id="MF_00100"/>
    </source>
</evidence>
<evidence type="ECO:0000256" key="3">
    <source>
        <dbReference type="SAM" id="MobiDB-lite"/>
    </source>
</evidence>
<feature type="chain" id="PRO_0000228231" description="Translation initiation factor IF-2">
    <location>
        <begin position="1"/>
        <end position="843"/>
    </location>
</feature>
<feature type="domain" description="tr-type G">
    <location>
        <begin position="343"/>
        <end position="512"/>
    </location>
</feature>
<feature type="region of interest" description="Disordered" evidence="3">
    <location>
        <begin position="94"/>
        <end position="259"/>
    </location>
</feature>
<feature type="region of interest" description="G1" evidence="1">
    <location>
        <begin position="352"/>
        <end position="359"/>
    </location>
</feature>
<feature type="region of interest" description="G2" evidence="1">
    <location>
        <begin position="377"/>
        <end position="381"/>
    </location>
</feature>
<feature type="region of interest" description="G3" evidence="1">
    <location>
        <begin position="398"/>
        <end position="401"/>
    </location>
</feature>
<feature type="region of interest" description="G4" evidence="1">
    <location>
        <begin position="452"/>
        <end position="455"/>
    </location>
</feature>
<feature type="region of interest" description="G5" evidence="1">
    <location>
        <begin position="488"/>
        <end position="490"/>
    </location>
</feature>
<feature type="compositionally biased region" description="Basic and acidic residues" evidence="3">
    <location>
        <begin position="96"/>
        <end position="135"/>
    </location>
</feature>
<feature type="compositionally biased region" description="Low complexity" evidence="3">
    <location>
        <begin position="136"/>
        <end position="177"/>
    </location>
</feature>
<feature type="compositionally biased region" description="Basic and acidic residues" evidence="3">
    <location>
        <begin position="178"/>
        <end position="219"/>
    </location>
</feature>
<feature type="compositionally biased region" description="Basic and acidic residues" evidence="3">
    <location>
        <begin position="227"/>
        <end position="236"/>
    </location>
</feature>
<feature type="compositionally biased region" description="Basic residues" evidence="3">
    <location>
        <begin position="237"/>
        <end position="250"/>
    </location>
</feature>
<feature type="binding site" evidence="2">
    <location>
        <begin position="352"/>
        <end position="359"/>
    </location>
    <ligand>
        <name>GTP</name>
        <dbReference type="ChEBI" id="CHEBI:37565"/>
    </ligand>
</feature>
<feature type="binding site" evidence="2">
    <location>
        <begin position="398"/>
        <end position="402"/>
    </location>
    <ligand>
        <name>GTP</name>
        <dbReference type="ChEBI" id="CHEBI:37565"/>
    </ligand>
</feature>
<feature type="binding site" evidence="2">
    <location>
        <begin position="452"/>
        <end position="455"/>
    </location>
    <ligand>
        <name>GTP</name>
        <dbReference type="ChEBI" id="CHEBI:37565"/>
    </ligand>
</feature>
<comment type="function">
    <text evidence="2">One of the essential components for the initiation of protein synthesis. Protects formylmethionyl-tRNA from spontaneous hydrolysis and promotes its binding to the 30S ribosomal subunits. Also involved in the hydrolysis of GTP during the formation of the 70S ribosomal complex.</text>
</comment>
<comment type="subcellular location">
    <subcellularLocation>
        <location evidence="2">Cytoplasm</location>
    </subcellularLocation>
</comment>
<comment type="similarity">
    <text evidence="2">Belongs to the TRAFAC class translation factor GTPase superfamily. Classic translation factor GTPase family. IF-2 subfamily.</text>
</comment>
<organism>
    <name type="scientific">Pseudomonas savastanoi pv. phaseolicola (strain 1448A / Race 6)</name>
    <name type="common">Pseudomonas syringae pv. phaseolicola (strain 1448A / Race 6)</name>
    <dbReference type="NCBI Taxonomy" id="264730"/>
    <lineage>
        <taxon>Bacteria</taxon>
        <taxon>Pseudomonadati</taxon>
        <taxon>Pseudomonadota</taxon>
        <taxon>Gammaproteobacteria</taxon>
        <taxon>Pseudomonadales</taxon>
        <taxon>Pseudomonadaceae</taxon>
        <taxon>Pseudomonas</taxon>
    </lineage>
</organism>
<name>IF2_PSE14</name>